<accession>D3Z7H4</accession>
<gene>
    <name type="primary">Gsg1l</name>
</gene>
<name>GSG1L_MOUSE</name>
<protein>
    <recommendedName>
        <fullName>Germ cell-specific gene 1-like protein</fullName>
        <shortName>GSG1-like protein</shortName>
    </recommendedName>
</protein>
<evidence type="ECO:0000250" key="1"/>
<evidence type="ECO:0000250" key="2">
    <source>
        <dbReference type="UniProtKB" id="D3ZK93"/>
    </source>
</evidence>
<evidence type="ECO:0000255" key="3"/>
<evidence type="ECO:0000269" key="4">
    <source>
    </source>
</evidence>
<evidence type="ECO:0000305" key="5"/>
<dbReference type="EMBL" id="AC012297">
    <property type="status" value="NOT_ANNOTATED_CDS"/>
    <property type="molecule type" value="Genomic_DNA"/>
</dbReference>
<dbReference type="EMBL" id="AC150648">
    <property type="status" value="NOT_ANNOTATED_CDS"/>
    <property type="molecule type" value="Genomic_DNA"/>
</dbReference>
<dbReference type="EMBL" id="CH466531">
    <property type="protein sequence ID" value="EDL17337.1"/>
    <property type="molecule type" value="Genomic_DNA"/>
</dbReference>
<dbReference type="CCDS" id="CCDS52395.1"/>
<dbReference type="RefSeq" id="NP_001094958.1">
    <property type="nucleotide sequence ID" value="NM_001101488.2"/>
</dbReference>
<dbReference type="PDB" id="5WEK">
    <property type="method" value="EM"/>
    <property type="resolution" value="4.60 A"/>
    <property type="chains" value="A/B/C/D=2-238"/>
</dbReference>
<dbReference type="PDB" id="5WEL">
    <property type="method" value="EM"/>
    <property type="resolution" value="4.40 A"/>
    <property type="chains" value="A/B/C/D=2-238"/>
</dbReference>
<dbReference type="PDB" id="5WEM">
    <property type="method" value="EM"/>
    <property type="resolution" value="6.10 A"/>
    <property type="chains" value="A/B/C/D=2-238"/>
</dbReference>
<dbReference type="PDB" id="5WEN">
    <property type="method" value="EM"/>
    <property type="resolution" value="6.80 A"/>
    <property type="chains" value="A/B/C/D=2-238"/>
</dbReference>
<dbReference type="PDBsum" id="5WEK"/>
<dbReference type="PDBsum" id="5WEL"/>
<dbReference type="PDBsum" id="5WEM"/>
<dbReference type="PDBsum" id="5WEN"/>
<dbReference type="EMDB" id="EMD-8819"/>
<dbReference type="EMDB" id="EMD-8820"/>
<dbReference type="EMDB" id="EMD-8821"/>
<dbReference type="EMDB" id="EMD-8822"/>
<dbReference type="SMR" id="D3Z7H4"/>
<dbReference type="FunCoup" id="D3Z7H4">
    <property type="interactions" value="57"/>
</dbReference>
<dbReference type="IntAct" id="D3Z7H4">
    <property type="interactions" value="1"/>
</dbReference>
<dbReference type="STRING" id="10090.ENSMUSP00000073591"/>
<dbReference type="iPTMnet" id="D3Z7H4"/>
<dbReference type="PhosphoSitePlus" id="D3Z7H4"/>
<dbReference type="SwissPalm" id="D3Z7H4"/>
<dbReference type="PaxDb" id="10090-ENSMUSP00000073591"/>
<dbReference type="PeptideAtlas" id="D3Z7H4"/>
<dbReference type="ProteomicsDB" id="269844"/>
<dbReference type="Antibodypedia" id="3053">
    <property type="antibodies" value="91 antibodies from 18 providers"/>
</dbReference>
<dbReference type="Ensembl" id="ENSMUST00000073935.7">
    <property type="protein sequence ID" value="ENSMUSP00000073591.6"/>
    <property type="gene ID" value="ENSMUSG00000046182.9"/>
</dbReference>
<dbReference type="GeneID" id="269994"/>
<dbReference type="KEGG" id="mmu:269994"/>
<dbReference type="UCSC" id="uc009jqp.2">
    <property type="organism name" value="mouse"/>
</dbReference>
<dbReference type="AGR" id="MGI:2685483"/>
<dbReference type="CTD" id="146395"/>
<dbReference type="MGI" id="MGI:2685483">
    <property type="gene designation" value="Gsg1l"/>
</dbReference>
<dbReference type="VEuPathDB" id="HostDB:ENSMUSG00000046182"/>
<dbReference type="eggNOG" id="ENOG502QRSH">
    <property type="taxonomic scope" value="Eukaryota"/>
</dbReference>
<dbReference type="GeneTree" id="ENSGT01050000244814"/>
<dbReference type="HOGENOM" id="CLU_063057_0_0_1"/>
<dbReference type="InParanoid" id="D3Z7H4"/>
<dbReference type="OMA" id="FRLACRH"/>
<dbReference type="OrthoDB" id="10001768at2759"/>
<dbReference type="PhylomeDB" id="D3Z7H4"/>
<dbReference type="TreeFam" id="TF331388"/>
<dbReference type="BioGRID-ORCS" id="269994">
    <property type="hits" value="1 hit in 76 CRISPR screens"/>
</dbReference>
<dbReference type="ChiTaRS" id="Gsg1l">
    <property type="organism name" value="mouse"/>
</dbReference>
<dbReference type="PRO" id="PR:D3Z7H4"/>
<dbReference type="Proteomes" id="UP000000589">
    <property type="component" value="Chromosome 7"/>
</dbReference>
<dbReference type="RNAct" id="D3Z7H4">
    <property type="molecule type" value="protein"/>
</dbReference>
<dbReference type="Bgee" id="ENSMUSG00000046182">
    <property type="expression patterns" value="Expressed in cortical plate and 88 other cell types or tissues"/>
</dbReference>
<dbReference type="GO" id="GO:0032279">
    <property type="term" value="C:asymmetric synapse"/>
    <property type="evidence" value="ECO:0000314"/>
    <property type="project" value="MGI"/>
</dbReference>
<dbReference type="GO" id="GO:0098978">
    <property type="term" value="C:glutamatergic synapse"/>
    <property type="evidence" value="ECO:0000314"/>
    <property type="project" value="SynGO"/>
</dbReference>
<dbReference type="GO" id="GO:0098839">
    <property type="term" value="C:postsynaptic density membrane"/>
    <property type="evidence" value="ECO:0007669"/>
    <property type="project" value="Ensembl"/>
</dbReference>
<dbReference type="GO" id="GO:0098685">
    <property type="term" value="C:Schaffer collateral - CA1 synapse"/>
    <property type="evidence" value="ECO:0000314"/>
    <property type="project" value="SynGO"/>
</dbReference>
<dbReference type="GO" id="GO:0099149">
    <property type="term" value="P:regulation of postsynaptic neurotransmitter receptor internalization"/>
    <property type="evidence" value="ECO:0000314"/>
    <property type="project" value="SynGO"/>
</dbReference>
<dbReference type="GO" id="GO:0048172">
    <property type="term" value="P:regulation of short-term neuronal synaptic plasticity"/>
    <property type="evidence" value="ECO:0000315"/>
    <property type="project" value="MGI"/>
</dbReference>
<dbReference type="GO" id="GO:0050808">
    <property type="term" value="P:synapse organization"/>
    <property type="evidence" value="ECO:0000315"/>
    <property type="project" value="MGI"/>
</dbReference>
<dbReference type="GO" id="GO:0019226">
    <property type="term" value="P:transmission of nerve impulse"/>
    <property type="evidence" value="ECO:0000315"/>
    <property type="project" value="MGI"/>
</dbReference>
<dbReference type="FunFam" id="1.20.140.150:FF:000005">
    <property type="entry name" value="Germ cell-specific gene 1-like"/>
    <property type="match status" value="1"/>
</dbReference>
<dbReference type="Gene3D" id="1.20.140.150">
    <property type="match status" value="1"/>
</dbReference>
<dbReference type="InterPro" id="IPR012478">
    <property type="entry name" value="GSG-1"/>
</dbReference>
<dbReference type="InterPro" id="IPR050579">
    <property type="entry name" value="PMP-22/EMP/MP20-like"/>
</dbReference>
<dbReference type="PANTHER" id="PTHR10671">
    <property type="entry name" value="EPITHELIAL MEMBRANE PROTEIN-RELATED"/>
    <property type="match status" value="1"/>
</dbReference>
<dbReference type="PANTHER" id="PTHR10671:SF35">
    <property type="entry name" value="GERM CELL-SPECIFIC GENE 1-LIKE PROTEIN"/>
    <property type="match status" value="1"/>
</dbReference>
<dbReference type="Pfam" id="PF07803">
    <property type="entry name" value="GSG-1"/>
    <property type="match status" value="1"/>
</dbReference>
<proteinExistence type="evidence at protein level"/>
<feature type="chain" id="PRO_0000420684" description="Germ cell-specific gene 1-like protein">
    <location>
        <begin position="1"/>
        <end position="322"/>
    </location>
</feature>
<feature type="topological domain" description="Cytoplasmic" evidence="3">
    <location>
        <begin position="1"/>
        <end position="8"/>
    </location>
</feature>
<feature type="transmembrane region" description="Helical" evidence="3">
    <location>
        <begin position="9"/>
        <end position="29"/>
    </location>
</feature>
<feature type="topological domain" description="Extracellular" evidence="3">
    <location>
        <begin position="30"/>
        <end position="122"/>
    </location>
</feature>
<feature type="transmembrane region" description="Helical" evidence="3">
    <location>
        <begin position="123"/>
        <end position="143"/>
    </location>
</feature>
<feature type="topological domain" description="Cytoplasmic" evidence="3">
    <location>
        <begin position="144"/>
        <end position="163"/>
    </location>
</feature>
<feature type="transmembrane region" description="Helical" evidence="3">
    <location>
        <begin position="164"/>
        <end position="184"/>
    </location>
</feature>
<feature type="topological domain" description="Extracellular" evidence="3">
    <location>
        <begin position="185"/>
        <end position="207"/>
    </location>
</feature>
<feature type="transmembrane region" description="Helical" evidence="3">
    <location>
        <begin position="208"/>
        <end position="228"/>
    </location>
</feature>
<feature type="topological domain" description="Cytoplasmic" evidence="3">
    <location>
        <begin position="229"/>
        <end position="322"/>
    </location>
</feature>
<feature type="modified residue" description="Phosphoserine" evidence="2">
    <location>
        <position position="274"/>
    </location>
</feature>
<keyword id="KW-0002">3D-structure</keyword>
<keyword id="KW-1003">Cell membrane</keyword>
<keyword id="KW-0472">Membrane</keyword>
<keyword id="KW-0597">Phosphoprotein</keyword>
<keyword id="KW-1185">Reference proteome</keyword>
<keyword id="KW-0770">Synapse</keyword>
<keyword id="KW-0812">Transmembrane</keyword>
<keyword id="KW-1133">Transmembrane helix</keyword>
<reference key="1">
    <citation type="journal article" date="2009" name="PLoS Biol.">
        <title>Lineage-specific biology revealed by a finished genome assembly of the mouse.</title>
        <authorList>
            <person name="Church D.M."/>
            <person name="Goodstadt L."/>
            <person name="Hillier L.W."/>
            <person name="Zody M.C."/>
            <person name="Goldstein S."/>
            <person name="She X."/>
            <person name="Bult C.J."/>
            <person name="Agarwala R."/>
            <person name="Cherry J.L."/>
            <person name="DiCuccio M."/>
            <person name="Hlavina W."/>
            <person name="Kapustin Y."/>
            <person name="Meric P."/>
            <person name="Maglott D."/>
            <person name="Birtle Z."/>
            <person name="Marques A.C."/>
            <person name="Graves T."/>
            <person name="Zhou S."/>
            <person name="Teague B."/>
            <person name="Potamousis K."/>
            <person name="Churas C."/>
            <person name="Place M."/>
            <person name="Herschleb J."/>
            <person name="Runnheim R."/>
            <person name="Forrest D."/>
            <person name="Amos-Landgraf J."/>
            <person name="Schwartz D.C."/>
            <person name="Cheng Z."/>
            <person name="Lindblad-Toh K."/>
            <person name="Eichler E.E."/>
            <person name="Ponting C.P."/>
        </authorList>
    </citation>
    <scope>NUCLEOTIDE SEQUENCE [LARGE SCALE GENOMIC DNA]</scope>
    <source>
        <strain>C57BL/6J</strain>
    </source>
</reference>
<reference key="2">
    <citation type="submission" date="2005-07" db="EMBL/GenBank/DDBJ databases">
        <authorList>
            <person name="Mural R.J."/>
            <person name="Adams M.D."/>
            <person name="Myers E.W."/>
            <person name="Smith H.O."/>
            <person name="Venter J.C."/>
        </authorList>
    </citation>
    <scope>NUCLEOTIDE SEQUENCE [LARGE SCALE GENOMIC DNA]</scope>
</reference>
<reference key="3">
    <citation type="journal article" date="2012" name="Neuron">
        <title>High-resolution proteomics unravel architecture and molecular diversity of native AMPA receptor complexes.</title>
        <authorList>
            <person name="Schwenk J."/>
            <person name="Harmel N."/>
            <person name="Brechet A."/>
            <person name="Zolles G."/>
            <person name="Berkefeld H."/>
            <person name="Muller C.S."/>
            <person name="Bildl W."/>
            <person name="Baehrens D."/>
            <person name="Huber B."/>
            <person name="Kulik A."/>
            <person name="Klocker N."/>
            <person name="Schulte U."/>
            <person name="Fakler B."/>
        </authorList>
    </citation>
    <scope>IDENTIFICATION IN AMPAR COMPLEX</scope>
    <scope>TOPOLOGY</scope>
    <scope>SUBCELLULAR LOCATION</scope>
    <scope>TISSUE SPECIFICITY</scope>
</reference>
<sequence>MKTSRRGRALLAVALNLLALLFATTAFLTTYWCQGTQRVPKPGCGQGGGANCPNSGANATANSTAAPVAASPAGAPYSWEAGDERFQLRRFHTGIWYSCEEELGGPGEKCRSFIDLAPASEKGVLWLSVVSEVLYILLLVVGFSLMCLELVHSSSVIDGLKLNAFAAVFTVLSGLLGMVAHMMYTQVFQVTVSLGPEDWRPHSWDYGWSFCLAWGSFTCCMAASVTTLNSYTKTVIEFRHKRKVFEQGYREEPTFIDPEAIKYFRERIEKGDVSEEEDFRLACRHERYPTRHQPHMGDSWPRSSAHEAAELNRQCWVLGHWV</sequence>
<organism>
    <name type="scientific">Mus musculus</name>
    <name type="common">Mouse</name>
    <dbReference type="NCBI Taxonomy" id="10090"/>
    <lineage>
        <taxon>Eukaryota</taxon>
        <taxon>Metazoa</taxon>
        <taxon>Chordata</taxon>
        <taxon>Craniata</taxon>
        <taxon>Vertebrata</taxon>
        <taxon>Euteleostomi</taxon>
        <taxon>Mammalia</taxon>
        <taxon>Eutheria</taxon>
        <taxon>Euarchontoglires</taxon>
        <taxon>Glires</taxon>
        <taxon>Rodentia</taxon>
        <taxon>Myomorpha</taxon>
        <taxon>Muroidea</taxon>
        <taxon>Muridae</taxon>
        <taxon>Murinae</taxon>
        <taxon>Mus</taxon>
        <taxon>Mus</taxon>
    </lineage>
</organism>
<comment type="function">
    <text evidence="1">As a component of the inner core of AMPAR complexes, modifies AMPA receptor (AMPAR) gating.</text>
</comment>
<comment type="subunit">
    <text evidence="4">Component of the inner core of AMPAR complexes. AMPAR complexes consist of an inner core made of 4 pore-forming GluA/GRIA proteins (GRIA1, GRIA2, GRIA3 and GRIA4) and 4 major auxiliary subunits arranged in a twofold symmetry. One of the two pairs of distinct binding sites is occupied either by CNIH2, CNIH3 or CACNG2, CACNG3. The other harbors CACNG2, CACNG3, CACNG4, CACNG8 or GSG1L. This inner core of AMPAR complexes is complemented by outer core constituents binding directly to the GluA/GRIA proteins at sites distinct from the interaction sites of the inner core constituents. Outer core constituents include at least PRRT1, PRRT2, CKAMP44/SHISA9, FRRS1L and NRN1. The proteins of the inner and outer core serve as a platform for other, more peripherally associated AMPAR constituents. Alone or in combination, these auxiliary subunits control the gating and pharmacology of the AMPAR complexes and profoundly impact their biogenesis and protein processing.</text>
</comment>
<comment type="subcellular location">
    <subcellularLocation>
        <location evidence="4">Cell membrane</location>
        <topology evidence="4">Multi-pass membrane protein</topology>
    </subcellularLocation>
    <subcellularLocation>
        <location evidence="1">Synapse</location>
    </subcellularLocation>
</comment>
<comment type="tissue specificity">
    <text evidence="4">Expressed in the brain, including hippocampus (at protein level).</text>
</comment>
<comment type="similarity">
    <text evidence="5">Belongs to the GSG1 family.</text>
</comment>